<feature type="chain" id="PRO_0000372257" description="Putative antiporter subunit mnhC2">
    <location>
        <begin position="1"/>
        <end position="114"/>
    </location>
</feature>
<feature type="transmembrane region" description="Helical" evidence="2">
    <location>
        <begin position="3"/>
        <end position="23"/>
    </location>
</feature>
<feature type="transmembrane region" description="Helical" evidence="2">
    <location>
        <begin position="28"/>
        <end position="48"/>
    </location>
</feature>
<feature type="transmembrane region" description="Helical" evidence="2">
    <location>
        <begin position="72"/>
        <end position="92"/>
    </location>
</feature>
<accession>Q7A726</accession>
<comment type="subunit">
    <text evidence="1">May form a heterooligomeric complex that consists of seven subunits: mnhA2, mnhB2, mnhC2, mnhD2, mnhE2, mnhF2 and mnhG2.</text>
</comment>
<comment type="subcellular location">
    <subcellularLocation>
        <location evidence="3">Cell membrane</location>
        <topology evidence="3">Multi-pass membrane protein</topology>
    </subcellularLocation>
</comment>
<comment type="similarity">
    <text evidence="3">Belongs to the CPA3 antiporters (TC 2.A.63) subunit C family.</text>
</comment>
<evidence type="ECO:0000250" key="1"/>
<evidence type="ECO:0000255" key="2"/>
<evidence type="ECO:0000305" key="3"/>
<gene>
    <name type="primary">mnhC2</name>
    <name type="synonym">mrpC2</name>
    <name type="ordered locus">SA0580</name>
</gene>
<keyword id="KW-0050">Antiport</keyword>
<keyword id="KW-1003">Cell membrane</keyword>
<keyword id="KW-0406">Ion transport</keyword>
<keyword id="KW-0472">Membrane</keyword>
<keyword id="KW-0812">Transmembrane</keyword>
<keyword id="KW-1133">Transmembrane helix</keyword>
<keyword id="KW-0813">Transport</keyword>
<sequence length="114" mass="12496">MNLILLLVIGFLVFIGTYMILSINLIRIVIGISIYTHAGNLIIMSMGTYGSSRSEPLITGGNQLFVDPLLQAIVLTAIVIGFGMTAFLLVLVYRTYKVTKEDEIEGLRGEDDAK</sequence>
<proteinExistence type="inferred from homology"/>
<reference key="1">
    <citation type="journal article" date="2001" name="Lancet">
        <title>Whole genome sequencing of meticillin-resistant Staphylococcus aureus.</title>
        <authorList>
            <person name="Kuroda M."/>
            <person name="Ohta T."/>
            <person name="Uchiyama I."/>
            <person name="Baba T."/>
            <person name="Yuzawa H."/>
            <person name="Kobayashi I."/>
            <person name="Cui L."/>
            <person name="Oguchi A."/>
            <person name="Aoki K."/>
            <person name="Nagai Y."/>
            <person name="Lian J.-Q."/>
            <person name="Ito T."/>
            <person name="Kanamori M."/>
            <person name="Matsumaru H."/>
            <person name="Maruyama A."/>
            <person name="Murakami H."/>
            <person name="Hosoyama A."/>
            <person name="Mizutani-Ui Y."/>
            <person name="Takahashi N.K."/>
            <person name="Sawano T."/>
            <person name="Inoue R."/>
            <person name="Kaito C."/>
            <person name="Sekimizu K."/>
            <person name="Hirakawa H."/>
            <person name="Kuhara S."/>
            <person name="Goto S."/>
            <person name="Yabuzaki J."/>
            <person name="Kanehisa M."/>
            <person name="Yamashita A."/>
            <person name="Oshima K."/>
            <person name="Furuya K."/>
            <person name="Yoshino C."/>
            <person name="Shiba T."/>
            <person name="Hattori M."/>
            <person name="Ogasawara N."/>
            <person name="Hayashi H."/>
            <person name="Hiramatsu K."/>
        </authorList>
    </citation>
    <scope>NUCLEOTIDE SEQUENCE [LARGE SCALE GENOMIC DNA]</scope>
    <source>
        <strain>N315</strain>
    </source>
</reference>
<name>MNHC2_STAAN</name>
<dbReference type="EMBL" id="BA000018">
    <property type="protein sequence ID" value="BAB41812.1"/>
    <property type="molecule type" value="Genomic_DNA"/>
</dbReference>
<dbReference type="PIR" id="A89832">
    <property type="entry name" value="A89832"/>
</dbReference>
<dbReference type="RefSeq" id="WP_001048985.1">
    <property type="nucleotide sequence ID" value="NC_002745.2"/>
</dbReference>
<dbReference type="SMR" id="Q7A726"/>
<dbReference type="EnsemblBacteria" id="BAB41812">
    <property type="protein sequence ID" value="BAB41812"/>
    <property type="gene ID" value="BAB41812"/>
</dbReference>
<dbReference type="KEGG" id="sau:SA0580"/>
<dbReference type="HOGENOM" id="CLU_082058_3_1_9"/>
<dbReference type="GO" id="GO:0005886">
    <property type="term" value="C:plasma membrane"/>
    <property type="evidence" value="ECO:0007669"/>
    <property type="project" value="UniProtKB-SubCell"/>
</dbReference>
<dbReference type="GO" id="GO:0015297">
    <property type="term" value="F:antiporter activity"/>
    <property type="evidence" value="ECO:0007669"/>
    <property type="project" value="UniProtKB-KW"/>
</dbReference>
<dbReference type="GO" id="GO:0006811">
    <property type="term" value="P:monoatomic ion transport"/>
    <property type="evidence" value="ECO:0007669"/>
    <property type="project" value="UniProtKB-KW"/>
</dbReference>
<dbReference type="Gene3D" id="1.10.287.3510">
    <property type="match status" value="1"/>
</dbReference>
<dbReference type="InterPro" id="IPR050601">
    <property type="entry name" value="CPA3_antiporter_subunitC"/>
</dbReference>
<dbReference type="InterPro" id="IPR039428">
    <property type="entry name" value="NUOK/Mnh_C1-like"/>
</dbReference>
<dbReference type="NCBIfam" id="NF009303">
    <property type="entry name" value="PRK12660.1"/>
    <property type="match status" value="1"/>
</dbReference>
<dbReference type="PANTHER" id="PTHR34583">
    <property type="entry name" value="ANTIPORTER SUBUNIT MNHC2-RELATED"/>
    <property type="match status" value="1"/>
</dbReference>
<dbReference type="PANTHER" id="PTHR34583:SF2">
    <property type="entry name" value="ANTIPORTER SUBUNIT MNHC2-RELATED"/>
    <property type="match status" value="1"/>
</dbReference>
<dbReference type="Pfam" id="PF00420">
    <property type="entry name" value="Oxidored_q2"/>
    <property type="match status" value="1"/>
</dbReference>
<organism>
    <name type="scientific">Staphylococcus aureus (strain N315)</name>
    <dbReference type="NCBI Taxonomy" id="158879"/>
    <lineage>
        <taxon>Bacteria</taxon>
        <taxon>Bacillati</taxon>
        <taxon>Bacillota</taxon>
        <taxon>Bacilli</taxon>
        <taxon>Bacillales</taxon>
        <taxon>Staphylococcaceae</taxon>
        <taxon>Staphylococcus</taxon>
    </lineage>
</organism>
<protein>
    <recommendedName>
        <fullName>Putative antiporter subunit mnhC2</fullName>
    </recommendedName>
    <alternativeName>
        <fullName>Mrp complex subunit C2</fullName>
    </alternativeName>
    <alternativeName>
        <fullName>Putative NADH-ubiquinone oxidoreductase subunit mnhC2</fullName>
    </alternativeName>
</protein>